<protein>
    <recommendedName>
        <fullName>Uncharacterized protein aq_1428</fullName>
    </recommendedName>
</protein>
<proteinExistence type="predicted"/>
<accession>O67421</accession>
<sequence>MLRFEDWELAVVIILTRFMEAIAIIISIYLAFNGYKLRYVLATAGVFLLSVLINLTGLIFRPYFIYFSLASIFLSALILTALILYVKKNPEKTKSFSLPENARCPVCNVLILKEDELCTAKIGNYTYYFDTCHHLVQLLKEPDYFVERGNIFKGELKEVFVKTKDTKKWKKFSEVKLVGEDGRLVAYENPPKGAKVINPEEILRESPLS</sequence>
<evidence type="ECO:0000255" key="1"/>
<evidence type="ECO:0000305" key="2"/>
<gene>
    <name type="ordered locus">aq_1428</name>
</gene>
<keyword id="KW-1003">Cell membrane</keyword>
<keyword id="KW-0472">Membrane</keyword>
<keyword id="KW-1185">Reference proteome</keyword>
<keyword id="KW-0812">Transmembrane</keyword>
<keyword id="KW-1133">Transmembrane helix</keyword>
<reference key="1">
    <citation type="journal article" date="1998" name="Nature">
        <title>The complete genome of the hyperthermophilic bacterium Aquifex aeolicus.</title>
        <authorList>
            <person name="Deckert G."/>
            <person name="Warren P.V."/>
            <person name="Gaasterland T."/>
            <person name="Young W.G."/>
            <person name="Lenox A.L."/>
            <person name="Graham D.E."/>
            <person name="Overbeek R."/>
            <person name="Snead M.A."/>
            <person name="Keller M."/>
            <person name="Aujay M."/>
            <person name="Huber R."/>
            <person name="Feldman R.A."/>
            <person name="Short J.M."/>
            <person name="Olsen G.J."/>
            <person name="Swanson R.V."/>
        </authorList>
    </citation>
    <scope>NUCLEOTIDE SEQUENCE [LARGE SCALE GENOMIC DNA]</scope>
    <source>
        <strain>VF5</strain>
    </source>
</reference>
<feature type="chain" id="PRO_0000186926" description="Uncharacterized protein aq_1428">
    <location>
        <begin position="1"/>
        <end position="209"/>
    </location>
</feature>
<feature type="transmembrane region" description="Helical" evidence="1">
    <location>
        <begin position="10"/>
        <end position="32"/>
    </location>
</feature>
<feature type="transmembrane region" description="Helical" evidence="1">
    <location>
        <begin position="37"/>
        <end position="59"/>
    </location>
</feature>
<feature type="transmembrane region" description="Helical" evidence="1">
    <location>
        <begin position="64"/>
        <end position="86"/>
    </location>
</feature>
<dbReference type="EMBL" id="AE000657">
    <property type="protein sequence ID" value="AAC07391.1"/>
    <property type="molecule type" value="Genomic_DNA"/>
</dbReference>
<dbReference type="PIR" id="C70424">
    <property type="entry name" value="C70424"/>
</dbReference>
<dbReference type="RefSeq" id="NP_213986.1">
    <property type="nucleotide sequence ID" value="NC_000918.1"/>
</dbReference>
<dbReference type="RefSeq" id="WP_010880924.1">
    <property type="nucleotide sequence ID" value="NC_000918.1"/>
</dbReference>
<dbReference type="SMR" id="O67421"/>
<dbReference type="STRING" id="224324.aq_1428"/>
<dbReference type="EnsemblBacteria" id="AAC07391">
    <property type="protein sequence ID" value="AAC07391"/>
    <property type="gene ID" value="aq_1428"/>
</dbReference>
<dbReference type="KEGG" id="aae:aq_1428"/>
<dbReference type="HOGENOM" id="CLU_1313306_0_0_0"/>
<dbReference type="InParanoid" id="O67421"/>
<dbReference type="OrthoDB" id="13987at2"/>
<dbReference type="Proteomes" id="UP000000798">
    <property type="component" value="Chromosome"/>
</dbReference>
<dbReference type="GO" id="GO:0005886">
    <property type="term" value="C:plasma membrane"/>
    <property type="evidence" value="ECO:0007669"/>
    <property type="project" value="UniProtKB-SubCell"/>
</dbReference>
<organism>
    <name type="scientific">Aquifex aeolicus (strain VF5)</name>
    <dbReference type="NCBI Taxonomy" id="224324"/>
    <lineage>
        <taxon>Bacteria</taxon>
        <taxon>Pseudomonadati</taxon>
        <taxon>Aquificota</taxon>
        <taxon>Aquificia</taxon>
        <taxon>Aquificales</taxon>
        <taxon>Aquificaceae</taxon>
        <taxon>Aquifex</taxon>
    </lineage>
</organism>
<comment type="subcellular location">
    <subcellularLocation>
        <location evidence="2">Cell membrane</location>
        <topology evidence="2">Multi-pass membrane protein</topology>
    </subcellularLocation>
</comment>
<name>Y1428_AQUAE</name>